<keyword id="KW-0687">Ribonucleoprotein</keyword>
<keyword id="KW-0689">Ribosomal protein</keyword>
<keyword id="KW-0694">RNA-binding</keyword>
<keyword id="KW-0699">rRNA-binding</keyword>
<keyword id="KW-0820">tRNA-binding</keyword>
<gene>
    <name evidence="1" type="primary">rpsM</name>
    <name type="ordered locus">Mkms_1127</name>
</gene>
<protein>
    <recommendedName>
        <fullName evidence="1">Small ribosomal subunit protein uS13</fullName>
    </recommendedName>
    <alternativeName>
        <fullName evidence="3">30S ribosomal protein S13</fullName>
    </alternativeName>
</protein>
<feature type="chain" id="PRO_0000306650" description="Small ribosomal subunit protein uS13">
    <location>
        <begin position="1"/>
        <end position="124"/>
    </location>
</feature>
<feature type="region of interest" description="Disordered" evidence="2">
    <location>
        <begin position="95"/>
        <end position="124"/>
    </location>
</feature>
<reference key="1">
    <citation type="submission" date="2006-12" db="EMBL/GenBank/DDBJ databases">
        <title>Complete sequence of chromosome of Mycobacterium sp. KMS.</title>
        <authorList>
            <consortium name="US DOE Joint Genome Institute"/>
            <person name="Copeland A."/>
            <person name="Lucas S."/>
            <person name="Lapidus A."/>
            <person name="Barry K."/>
            <person name="Detter J.C."/>
            <person name="Glavina del Rio T."/>
            <person name="Hammon N."/>
            <person name="Israni S."/>
            <person name="Dalin E."/>
            <person name="Tice H."/>
            <person name="Pitluck S."/>
            <person name="Kiss H."/>
            <person name="Brettin T."/>
            <person name="Bruce D."/>
            <person name="Han C."/>
            <person name="Tapia R."/>
            <person name="Gilna P."/>
            <person name="Schmutz J."/>
            <person name="Larimer F."/>
            <person name="Land M."/>
            <person name="Hauser L."/>
            <person name="Kyrpides N."/>
            <person name="Mikhailova N."/>
            <person name="Miller C.D."/>
            <person name="Richardson P."/>
        </authorList>
    </citation>
    <scope>NUCLEOTIDE SEQUENCE [LARGE SCALE GENOMIC DNA]</scope>
    <source>
        <strain>KMS</strain>
    </source>
</reference>
<evidence type="ECO:0000255" key="1">
    <source>
        <dbReference type="HAMAP-Rule" id="MF_01315"/>
    </source>
</evidence>
<evidence type="ECO:0000256" key="2">
    <source>
        <dbReference type="SAM" id="MobiDB-lite"/>
    </source>
</evidence>
<evidence type="ECO:0000305" key="3"/>
<accession>A1UBY2</accession>
<name>RS13_MYCSK</name>
<comment type="function">
    <text evidence="1">Located at the top of the head of the 30S subunit, it contacts several helices of the 16S rRNA. In the 70S ribosome it contacts the 23S rRNA (bridge B1a) and protein L5 of the 50S subunit (bridge B1b), connecting the 2 subunits; these bridges are implicated in subunit movement. Contacts the tRNAs in the A and P-sites.</text>
</comment>
<comment type="subunit">
    <text evidence="1">Part of the 30S ribosomal subunit. Forms a loose heterodimer with protein S19. Forms two bridges to the 50S subunit in the 70S ribosome.</text>
</comment>
<comment type="similarity">
    <text evidence="1">Belongs to the universal ribosomal protein uS13 family.</text>
</comment>
<dbReference type="EMBL" id="CP000518">
    <property type="protein sequence ID" value="ABL90340.1"/>
    <property type="molecule type" value="Genomic_DNA"/>
</dbReference>
<dbReference type="SMR" id="A1UBY2"/>
<dbReference type="STRING" id="189918.Mkms_1127"/>
<dbReference type="KEGG" id="mkm:Mkms_1127"/>
<dbReference type="HOGENOM" id="CLU_103849_1_2_11"/>
<dbReference type="OrthoDB" id="9803610at2"/>
<dbReference type="GO" id="GO:0005829">
    <property type="term" value="C:cytosol"/>
    <property type="evidence" value="ECO:0007669"/>
    <property type="project" value="TreeGrafter"/>
</dbReference>
<dbReference type="GO" id="GO:0015935">
    <property type="term" value="C:small ribosomal subunit"/>
    <property type="evidence" value="ECO:0007669"/>
    <property type="project" value="TreeGrafter"/>
</dbReference>
<dbReference type="GO" id="GO:0019843">
    <property type="term" value="F:rRNA binding"/>
    <property type="evidence" value="ECO:0007669"/>
    <property type="project" value="UniProtKB-UniRule"/>
</dbReference>
<dbReference type="GO" id="GO:0003735">
    <property type="term" value="F:structural constituent of ribosome"/>
    <property type="evidence" value="ECO:0007669"/>
    <property type="project" value="InterPro"/>
</dbReference>
<dbReference type="GO" id="GO:0000049">
    <property type="term" value="F:tRNA binding"/>
    <property type="evidence" value="ECO:0007669"/>
    <property type="project" value="UniProtKB-UniRule"/>
</dbReference>
<dbReference type="GO" id="GO:0006412">
    <property type="term" value="P:translation"/>
    <property type="evidence" value="ECO:0007669"/>
    <property type="project" value="UniProtKB-UniRule"/>
</dbReference>
<dbReference type="FunFam" id="1.10.8.50:FF:000001">
    <property type="entry name" value="30S ribosomal protein S13"/>
    <property type="match status" value="1"/>
</dbReference>
<dbReference type="FunFam" id="4.10.910.10:FF:000001">
    <property type="entry name" value="30S ribosomal protein S13"/>
    <property type="match status" value="1"/>
</dbReference>
<dbReference type="Gene3D" id="1.10.8.50">
    <property type="match status" value="1"/>
</dbReference>
<dbReference type="Gene3D" id="4.10.910.10">
    <property type="entry name" value="30s ribosomal protein s13, domain 2"/>
    <property type="match status" value="1"/>
</dbReference>
<dbReference type="HAMAP" id="MF_01315">
    <property type="entry name" value="Ribosomal_uS13"/>
    <property type="match status" value="1"/>
</dbReference>
<dbReference type="InterPro" id="IPR027437">
    <property type="entry name" value="Rbsml_uS13_C"/>
</dbReference>
<dbReference type="InterPro" id="IPR001892">
    <property type="entry name" value="Ribosomal_uS13"/>
</dbReference>
<dbReference type="InterPro" id="IPR010979">
    <property type="entry name" value="Ribosomal_uS13-like_H2TH"/>
</dbReference>
<dbReference type="InterPro" id="IPR019980">
    <property type="entry name" value="Ribosomal_uS13_bac-type"/>
</dbReference>
<dbReference type="InterPro" id="IPR018269">
    <property type="entry name" value="Ribosomal_uS13_CS"/>
</dbReference>
<dbReference type="NCBIfam" id="TIGR03631">
    <property type="entry name" value="uS13_bact"/>
    <property type="match status" value="1"/>
</dbReference>
<dbReference type="PANTHER" id="PTHR10871">
    <property type="entry name" value="30S RIBOSOMAL PROTEIN S13/40S RIBOSOMAL PROTEIN S18"/>
    <property type="match status" value="1"/>
</dbReference>
<dbReference type="PANTHER" id="PTHR10871:SF1">
    <property type="entry name" value="SMALL RIBOSOMAL SUBUNIT PROTEIN US13M"/>
    <property type="match status" value="1"/>
</dbReference>
<dbReference type="Pfam" id="PF00416">
    <property type="entry name" value="Ribosomal_S13"/>
    <property type="match status" value="1"/>
</dbReference>
<dbReference type="PIRSF" id="PIRSF002134">
    <property type="entry name" value="Ribosomal_S13"/>
    <property type="match status" value="1"/>
</dbReference>
<dbReference type="SUPFAM" id="SSF46946">
    <property type="entry name" value="S13-like H2TH domain"/>
    <property type="match status" value="1"/>
</dbReference>
<dbReference type="PROSITE" id="PS00646">
    <property type="entry name" value="RIBOSOMAL_S13_1"/>
    <property type="match status" value="1"/>
</dbReference>
<dbReference type="PROSITE" id="PS50159">
    <property type="entry name" value="RIBOSOMAL_S13_2"/>
    <property type="match status" value="1"/>
</dbReference>
<sequence>MARLVGVDLPRDKRMEIALTYIYGVGRTRSQEILEATGIDRDLRTKDLTDDQVTQLRDYIEANLKVEGDLRREVQADIRRKIEIGCYQGLRHRRGLPVRGQRTKTNARTRKGPKRTIAGKKKAR</sequence>
<proteinExistence type="inferred from homology"/>
<organism>
    <name type="scientific">Mycobacterium sp. (strain KMS)</name>
    <dbReference type="NCBI Taxonomy" id="189918"/>
    <lineage>
        <taxon>Bacteria</taxon>
        <taxon>Bacillati</taxon>
        <taxon>Actinomycetota</taxon>
        <taxon>Actinomycetes</taxon>
        <taxon>Mycobacteriales</taxon>
        <taxon>Mycobacteriaceae</taxon>
        <taxon>Mycobacterium</taxon>
    </lineage>
</organism>